<proteinExistence type="evidence at transcript level"/>
<protein>
    <recommendedName>
        <fullName>Nucleolar protein 10</fullName>
    </recommendedName>
</protein>
<comment type="subcellular location">
    <subcellularLocation>
        <location evidence="1">Nucleus</location>
        <location evidence="1">Nucleolus</location>
    </subcellularLocation>
</comment>
<comment type="similarity">
    <text evidence="5">Belongs to the WD repeat NOL10/ENP2 family.</text>
</comment>
<evidence type="ECO:0000250" key="1"/>
<evidence type="ECO:0000250" key="2">
    <source>
        <dbReference type="UniProtKB" id="Q9BSC4"/>
    </source>
</evidence>
<evidence type="ECO:0000255" key="3"/>
<evidence type="ECO:0000256" key="4">
    <source>
        <dbReference type="SAM" id="MobiDB-lite"/>
    </source>
</evidence>
<evidence type="ECO:0000305" key="5"/>
<keyword id="KW-0007">Acetylation</keyword>
<keyword id="KW-0175">Coiled coil</keyword>
<keyword id="KW-0539">Nucleus</keyword>
<keyword id="KW-0597">Phosphoprotein</keyword>
<keyword id="KW-1185">Reference proteome</keyword>
<keyword id="KW-0677">Repeat</keyword>
<keyword id="KW-0853">WD repeat</keyword>
<name>NOL10_MOUSE</name>
<reference key="1">
    <citation type="journal article" date="2004" name="Genome Res.">
        <title>The status, quality, and expansion of the NIH full-length cDNA project: the Mammalian Gene Collection (MGC).</title>
        <authorList>
            <consortium name="The MGC Project Team"/>
        </authorList>
    </citation>
    <scope>NUCLEOTIDE SEQUENCE [LARGE SCALE MRNA]</scope>
    <source>
        <strain>C57BL/6J</strain>
        <tissue>Head</tissue>
    </source>
</reference>
<feature type="chain" id="PRO_0000051102" description="Nucleolar protein 10">
    <location>
        <begin position="1"/>
        <end position="687"/>
    </location>
</feature>
<feature type="repeat" description="WD 1">
    <location>
        <begin position="50"/>
        <end position="90"/>
    </location>
</feature>
<feature type="repeat" description="WD 2">
    <location>
        <begin position="174"/>
        <end position="213"/>
    </location>
</feature>
<feature type="repeat" description="WD 3">
    <location>
        <begin position="228"/>
        <end position="266"/>
    </location>
</feature>
<feature type="repeat" description="WD 4">
    <location>
        <begin position="270"/>
        <end position="308"/>
    </location>
</feature>
<feature type="repeat" description="WD 5">
    <location>
        <begin position="310"/>
        <end position="349"/>
    </location>
</feature>
<feature type="region of interest" description="Disordered" evidence="4">
    <location>
        <begin position="526"/>
        <end position="560"/>
    </location>
</feature>
<feature type="region of interest" description="Disordered" evidence="4">
    <location>
        <begin position="643"/>
        <end position="687"/>
    </location>
</feature>
<feature type="coiled-coil region" evidence="3">
    <location>
        <begin position="423"/>
        <end position="476"/>
    </location>
</feature>
<feature type="coiled-coil region" evidence="3">
    <location>
        <begin position="514"/>
        <end position="588"/>
    </location>
</feature>
<feature type="coiled-coil region" evidence="3">
    <location>
        <begin position="639"/>
        <end position="672"/>
    </location>
</feature>
<feature type="compositionally biased region" description="Basic and acidic residues" evidence="4">
    <location>
        <begin position="647"/>
        <end position="662"/>
    </location>
</feature>
<feature type="compositionally biased region" description="Basic residues" evidence="4">
    <location>
        <begin position="663"/>
        <end position="687"/>
    </location>
</feature>
<feature type="modified residue" description="N-acetylmethionine" evidence="2">
    <location>
        <position position="1"/>
    </location>
</feature>
<feature type="modified residue" description="Phosphoserine" evidence="2">
    <location>
        <position position="25"/>
    </location>
</feature>
<feature type="modified residue" description="Phosphoserine" evidence="2">
    <location>
        <position position="475"/>
    </location>
</feature>
<feature type="modified residue" description="Phosphothreonine" evidence="2">
    <location>
        <position position="481"/>
    </location>
</feature>
<feature type="modified residue" description="Phosphoserine" evidence="2">
    <location>
        <position position="514"/>
    </location>
</feature>
<organism>
    <name type="scientific">Mus musculus</name>
    <name type="common">Mouse</name>
    <dbReference type="NCBI Taxonomy" id="10090"/>
    <lineage>
        <taxon>Eukaryota</taxon>
        <taxon>Metazoa</taxon>
        <taxon>Chordata</taxon>
        <taxon>Craniata</taxon>
        <taxon>Vertebrata</taxon>
        <taxon>Euteleostomi</taxon>
        <taxon>Mammalia</taxon>
        <taxon>Eutheria</taxon>
        <taxon>Euarchontoglires</taxon>
        <taxon>Glires</taxon>
        <taxon>Rodentia</taxon>
        <taxon>Myomorpha</taxon>
        <taxon>Muroidea</taxon>
        <taxon>Muridae</taxon>
        <taxon>Murinae</taxon>
        <taxon>Mus</taxon>
        <taxon>Mus</taxon>
    </lineage>
</organism>
<accession>Q5RJG1</accession>
<gene>
    <name type="primary">Nol10</name>
    <name type="synonym">Gm67</name>
</gene>
<dbReference type="EMBL" id="BC086676">
    <property type="protein sequence ID" value="AAH86676.1"/>
    <property type="molecule type" value="mRNA"/>
</dbReference>
<dbReference type="CCDS" id="CCDS25828.1"/>
<dbReference type="RefSeq" id="NP_001008421.1">
    <property type="nucleotide sequence ID" value="NM_001008421.1"/>
</dbReference>
<dbReference type="SMR" id="Q5RJG1"/>
<dbReference type="BioGRID" id="229915">
    <property type="interactions" value="5"/>
</dbReference>
<dbReference type="FunCoup" id="Q5RJG1">
    <property type="interactions" value="3573"/>
</dbReference>
<dbReference type="STRING" id="10090.ENSMUSP00000035930"/>
<dbReference type="iPTMnet" id="Q5RJG1"/>
<dbReference type="PhosphoSitePlus" id="Q5RJG1"/>
<dbReference type="jPOST" id="Q5RJG1"/>
<dbReference type="PaxDb" id="10090-ENSMUSP00000035930"/>
<dbReference type="ProteomicsDB" id="293870"/>
<dbReference type="Pumba" id="Q5RJG1"/>
<dbReference type="Antibodypedia" id="26703">
    <property type="antibodies" value="96 antibodies from 20 providers"/>
</dbReference>
<dbReference type="DNASU" id="217431"/>
<dbReference type="Ensembl" id="ENSMUST00000046011.12">
    <property type="protein sequence ID" value="ENSMUSP00000035930.11"/>
    <property type="gene ID" value="ENSMUSG00000061458.10"/>
</dbReference>
<dbReference type="GeneID" id="217431"/>
<dbReference type="KEGG" id="mmu:217431"/>
<dbReference type="UCSC" id="uc007ncu.1">
    <property type="organism name" value="mouse"/>
</dbReference>
<dbReference type="AGR" id="MGI:2684913"/>
<dbReference type="CTD" id="79954"/>
<dbReference type="MGI" id="MGI:2684913">
    <property type="gene designation" value="Nol10"/>
</dbReference>
<dbReference type="VEuPathDB" id="HostDB:ENSMUSG00000061458"/>
<dbReference type="eggNOG" id="KOG2321">
    <property type="taxonomic scope" value="Eukaryota"/>
</dbReference>
<dbReference type="GeneTree" id="ENSGT00390000007900"/>
<dbReference type="HOGENOM" id="CLU_009923_2_0_1"/>
<dbReference type="InParanoid" id="Q5RJG1"/>
<dbReference type="OMA" id="GYFMDVR"/>
<dbReference type="OrthoDB" id="273340at2759"/>
<dbReference type="PhylomeDB" id="Q5RJG1"/>
<dbReference type="TreeFam" id="TF105808"/>
<dbReference type="BioGRID-ORCS" id="217431">
    <property type="hits" value="27 hits in 76 CRISPR screens"/>
</dbReference>
<dbReference type="ChiTaRS" id="Nol10">
    <property type="organism name" value="mouse"/>
</dbReference>
<dbReference type="PRO" id="PR:Q5RJG1"/>
<dbReference type="Proteomes" id="UP000000589">
    <property type="component" value="Chromosome 12"/>
</dbReference>
<dbReference type="RNAct" id="Q5RJG1">
    <property type="molecule type" value="protein"/>
</dbReference>
<dbReference type="Bgee" id="ENSMUSG00000061458">
    <property type="expression patterns" value="Expressed in animal zygote and 204 other cell types or tissues"/>
</dbReference>
<dbReference type="ExpressionAtlas" id="Q5RJG1">
    <property type="expression patterns" value="baseline and differential"/>
</dbReference>
<dbReference type="GO" id="GO:0005730">
    <property type="term" value="C:nucleolus"/>
    <property type="evidence" value="ECO:0007669"/>
    <property type="project" value="UniProtKB-SubCell"/>
</dbReference>
<dbReference type="FunFam" id="2.130.10.10:FF:000601">
    <property type="entry name" value="Nucleolar protein 10"/>
    <property type="match status" value="1"/>
</dbReference>
<dbReference type="FunFam" id="2.130.10.10:FF:000980">
    <property type="entry name" value="Nucleolar protein 10"/>
    <property type="match status" value="1"/>
</dbReference>
<dbReference type="Gene3D" id="2.130.10.10">
    <property type="entry name" value="YVTN repeat-like/Quinoprotein amine dehydrogenase"/>
    <property type="match status" value="1"/>
</dbReference>
<dbReference type="InterPro" id="IPR056551">
    <property type="entry name" value="Beta-prop_NOL10_N"/>
</dbReference>
<dbReference type="InterPro" id="IPR040382">
    <property type="entry name" value="NOL10/Enp2"/>
</dbReference>
<dbReference type="InterPro" id="IPR056550">
    <property type="entry name" value="NOL10_2nd"/>
</dbReference>
<dbReference type="InterPro" id="IPR012580">
    <property type="entry name" value="NUC153"/>
</dbReference>
<dbReference type="InterPro" id="IPR015943">
    <property type="entry name" value="WD40/YVTN_repeat-like_dom_sf"/>
</dbReference>
<dbReference type="InterPro" id="IPR036322">
    <property type="entry name" value="WD40_repeat_dom_sf"/>
</dbReference>
<dbReference type="InterPro" id="IPR001680">
    <property type="entry name" value="WD40_rpt"/>
</dbReference>
<dbReference type="PANTHER" id="PTHR14927">
    <property type="entry name" value="NUCLEOLAR PROTEIN 10"/>
    <property type="match status" value="1"/>
</dbReference>
<dbReference type="PANTHER" id="PTHR14927:SF0">
    <property type="entry name" value="NUCLEOLAR PROTEIN 10"/>
    <property type="match status" value="1"/>
</dbReference>
<dbReference type="Pfam" id="PF23098">
    <property type="entry name" value="Beta-prop_NOL10_N"/>
    <property type="match status" value="1"/>
</dbReference>
<dbReference type="Pfam" id="PF23097">
    <property type="entry name" value="NOL10_2nd"/>
    <property type="match status" value="1"/>
</dbReference>
<dbReference type="Pfam" id="PF08159">
    <property type="entry name" value="NUC153"/>
    <property type="match status" value="1"/>
</dbReference>
<dbReference type="SMART" id="SM00320">
    <property type="entry name" value="WD40"/>
    <property type="match status" value="5"/>
</dbReference>
<dbReference type="SUPFAM" id="SSF50978">
    <property type="entry name" value="WD40 repeat-like"/>
    <property type="match status" value="1"/>
</dbReference>
<sequence>MQVSSLNEVKIYSLSCGKSLPEWLSDRKKRALQKKNVDVRRRIELIQDFEMPTVCTTIKVSKDGQYILATGTYKPRVRCYDTYQLSLKFERCLDSEVVTFEILSDDYSKIVFLHNDRYIEFHSQSGFYYKTRIPKFGRDFSYHYPSCDLYFVGASSEVYRLNLEQGRYLNPLQTDAAENNVCDINAVHGLFATGTIEGRVECWDPRVRKRVGVLDCALNSVTADSEINSLPTISALKFNGALSMAVGTSTGQVLLYDLRSDKPLLVKDHQYGLPIKSVHFQDSLDLVLSADSRIVKMWNKDSGKIFTSLEPEHDLNDVCLYPSSGMLLTANESPKMGIYYIPVLGPAPRWCSFLDNLTEELEENPESTVYDDYKFVTKKDLENLGLTHLIGSPFLRAYMHGFFMDIRLYHKVKLMVNPFAYEEYRKDKIRQKIEETRAQRVQLKKLPKVNKELALKLIEEEEEKQKSTLKKKVKSLPNILTDDRFKVMFENPDFQVDEESEEFRLLNPLVSRISEKRKKQLRLLEQQELKDEEEEEPEGKPSDAESSESSDDEKGWVEEVRKQRRLLQQEERVKRQEQLKEDQQTVLKPQFYEIKAGEEFRSFKESATKQRLMNKTLEDRLKLEAKHGTLNVSDTTVGSKQLTFTLKRSEQQKKQQEAEKLHRQERKNLRRSASHLRSRPRRGRPFH</sequence>